<keyword id="KW-0963">Cytoplasm</keyword>
<keyword id="KW-0227">DNA damage</keyword>
<keyword id="KW-0233">DNA recombination</keyword>
<keyword id="KW-0234">DNA repair</keyword>
<keyword id="KW-0238">DNA-binding</keyword>
<accession>B7HE55</accession>
<proteinExistence type="inferred from homology"/>
<organism>
    <name type="scientific">Bacillus cereus (strain B4264)</name>
    <dbReference type="NCBI Taxonomy" id="405532"/>
    <lineage>
        <taxon>Bacteria</taxon>
        <taxon>Bacillati</taxon>
        <taxon>Bacillota</taxon>
        <taxon>Bacilli</taxon>
        <taxon>Bacillales</taxon>
        <taxon>Bacillaceae</taxon>
        <taxon>Bacillus</taxon>
        <taxon>Bacillus cereus group</taxon>
    </lineage>
</organism>
<comment type="function">
    <text evidence="1">The RuvA-RuvB-RuvC complex processes Holliday junction (HJ) DNA during genetic recombination and DNA repair, while the RuvA-RuvB complex plays an important role in the rescue of blocked DNA replication forks via replication fork reversal (RFR). RuvA specifically binds to HJ cruciform DNA, conferring on it an open structure. The RuvB hexamer acts as an ATP-dependent pump, pulling dsDNA into and through the RuvAB complex. HJ branch migration allows RuvC to scan DNA until it finds its consensus sequence, where it cleaves and resolves the cruciform DNA.</text>
</comment>
<comment type="subunit">
    <text evidence="1">Homotetramer. Forms an RuvA(8)-RuvB(12)-Holliday junction (HJ) complex. HJ DNA is sandwiched between 2 RuvA tetramers; dsDNA enters through RuvA and exits via RuvB. An RuvB hexamer assembles on each DNA strand where it exits the tetramer. Each RuvB hexamer is contacted by two RuvA subunits (via domain III) on 2 adjacent RuvB subunits; this complex drives branch migration. In the full resolvosome a probable DNA-RuvA(4)-RuvB(12)-RuvC(2) complex forms which resolves the HJ.</text>
</comment>
<comment type="subcellular location">
    <subcellularLocation>
        <location evidence="1">Cytoplasm</location>
    </subcellularLocation>
</comment>
<comment type="domain">
    <text evidence="1">Has three domains with a flexible linker between the domains II and III and assumes an 'L' shape. Domain III is highly mobile and contacts RuvB.</text>
</comment>
<comment type="similarity">
    <text evidence="1">Belongs to the RuvA family.</text>
</comment>
<gene>
    <name evidence="1" type="primary">ruvA</name>
    <name type="ordered locus">BCB4264_A4540</name>
</gene>
<reference key="1">
    <citation type="submission" date="2008-10" db="EMBL/GenBank/DDBJ databases">
        <title>Genome sequence of Bacillus cereus B4264.</title>
        <authorList>
            <person name="Dodson R.J."/>
            <person name="Durkin A.S."/>
            <person name="Rosovitz M.J."/>
            <person name="Rasko D.A."/>
            <person name="Hoffmaster A."/>
            <person name="Ravel J."/>
            <person name="Sutton G."/>
        </authorList>
    </citation>
    <scope>NUCLEOTIDE SEQUENCE [LARGE SCALE GENOMIC DNA]</scope>
    <source>
        <strain>B4264</strain>
    </source>
</reference>
<feature type="chain" id="PRO_1000195117" description="Holliday junction branch migration complex subunit RuvA">
    <location>
        <begin position="1"/>
        <end position="205"/>
    </location>
</feature>
<feature type="region of interest" description="Domain I" evidence="1">
    <location>
        <begin position="1"/>
        <end position="62"/>
    </location>
</feature>
<feature type="region of interest" description="Domain II" evidence="1">
    <location>
        <begin position="63"/>
        <end position="141"/>
    </location>
</feature>
<feature type="region of interest" description="Flexible linker" evidence="1">
    <location>
        <begin position="142"/>
        <end position="152"/>
    </location>
</feature>
<feature type="region of interest" description="Domain III" evidence="1">
    <location>
        <begin position="153"/>
        <end position="205"/>
    </location>
</feature>
<name>RUVA_BACC4</name>
<evidence type="ECO:0000255" key="1">
    <source>
        <dbReference type="HAMAP-Rule" id="MF_00031"/>
    </source>
</evidence>
<sequence length="205" mass="23166">MFEYVTGYVEYVGPEYVVIDHNGIGYQIFTPNPYVFQRSKQEIRVYTYHYVREDIMALYGFKTREERLLFTKLLGVSGIGPKGALAILASGQTGQVVQAIEHEDEKFLVKFPGVGKKTARQMILDLKGKLADVVPDAFVDLFSDTERFDEKKGSSAELDEALEALRALGYAEREVSRVVPELLKESLTTDQYIKKALSLLLNGKR</sequence>
<protein>
    <recommendedName>
        <fullName evidence="1">Holliday junction branch migration complex subunit RuvA</fullName>
    </recommendedName>
</protein>
<dbReference type="EMBL" id="CP001176">
    <property type="protein sequence ID" value="ACK62796.1"/>
    <property type="molecule type" value="Genomic_DNA"/>
</dbReference>
<dbReference type="RefSeq" id="WP_000464511.1">
    <property type="nucleotide sequence ID" value="NZ_VEHB01000006.1"/>
</dbReference>
<dbReference type="SMR" id="B7HE55"/>
<dbReference type="GeneID" id="83638132"/>
<dbReference type="KEGG" id="bcb:BCB4264_A4540"/>
<dbReference type="HOGENOM" id="CLU_087936_1_0_9"/>
<dbReference type="Proteomes" id="UP000007096">
    <property type="component" value="Chromosome"/>
</dbReference>
<dbReference type="GO" id="GO:0005737">
    <property type="term" value="C:cytoplasm"/>
    <property type="evidence" value="ECO:0007669"/>
    <property type="project" value="UniProtKB-SubCell"/>
</dbReference>
<dbReference type="GO" id="GO:0009379">
    <property type="term" value="C:Holliday junction helicase complex"/>
    <property type="evidence" value="ECO:0007669"/>
    <property type="project" value="InterPro"/>
</dbReference>
<dbReference type="GO" id="GO:0048476">
    <property type="term" value="C:Holliday junction resolvase complex"/>
    <property type="evidence" value="ECO:0007669"/>
    <property type="project" value="UniProtKB-UniRule"/>
</dbReference>
<dbReference type="GO" id="GO:0005524">
    <property type="term" value="F:ATP binding"/>
    <property type="evidence" value="ECO:0007669"/>
    <property type="project" value="InterPro"/>
</dbReference>
<dbReference type="GO" id="GO:0000400">
    <property type="term" value="F:four-way junction DNA binding"/>
    <property type="evidence" value="ECO:0007669"/>
    <property type="project" value="UniProtKB-UniRule"/>
</dbReference>
<dbReference type="GO" id="GO:0009378">
    <property type="term" value="F:four-way junction helicase activity"/>
    <property type="evidence" value="ECO:0007669"/>
    <property type="project" value="InterPro"/>
</dbReference>
<dbReference type="GO" id="GO:0006310">
    <property type="term" value="P:DNA recombination"/>
    <property type="evidence" value="ECO:0007669"/>
    <property type="project" value="UniProtKB-UniRule"/>
</dbReference>
<dbReference type="GO" id="GO:0006281">
    <property type="term" value="P:DNA repair"/>
    <property type="evidence" value="ECO:0007669"/>
    <property type="project" value="UniProtKB-UniRule"/>
</dbReference>
<dbReference type="CDD" id="cd14332">
    <property type="entry name" value="UBA_RuvA_C"/>
    <property type="match status" value="1"/>
</dbReference>
<dbReference type="Gene3D" id="1.10.150.20">
    <property type="entry name" value="5' to 3' exonuclease, C-terminal subdomain"/>
    <property type="match status" value="1"/>
</dbReference>
<dbReference type="Gene3D" id="1.10.8.10">
    <property type="entry name" value="DNA helicase RuvA subunit, C-terminal domain"/>
    <property type="match status" value="1"/>
</dbReference>
<dbReference type="Gene3D" id="2.40.50.140">
    <property type="entry name" value="Nucleic acid-binding proteins"/>
    <property type="match status" value="1"/>
</dbReference>
<dbReference type="HAMAP" id="MF_00031">
    <property type="entry name" value="DNA_HJ_migration_RuvA"/>
    <property type="match status" value="1"/>
</dbReference>
<dbReference type="InterPro" id="IPR013849">
    <property type="entry name" value="DNA_helicase_Holl-junc_RuvA_I"/>
</dbReference>
<dbReference type="InterPro" id="IPR003583">
    <property type="entry name" value="Hlx-hairpin-Hlx_DNA-bd_motif"/>
</dbReference>
<dbReference type="InterPro" id="IPR012340">
    <property type="entry name" value="NA-bd_OB-fold"/>
</dbReference>
<dbReference type="InterPro" id="IPR000085">
    <property type="entry name" value="RuvA"/>
</dbReference>
<dbReference type="InterPro" id="IPR010994">
    <property type="entry name" value="RuvA_2-like"/>
</dbReference>
<dbReference type="InterPro" id="IPR011114">
    <property type="entry name" value="RuvA_C"/>
</dbReference>
<dbReference type="InterPro" id="IPR036267">
    <property type="entry name" value="RuvA_C_sf"/>
</dbReference>
<dbReference type="NCBIfam" id="TIGR00084">
    <property type="entry name" value="ruvA"/>
    <property type="match status" value="1"/>
</dbReference>
<dbReference type="Pfam" id="PF14520">
    <property type="entry name" value="HHH_5"/>
    <property type="match status" value="1"/>
</dbReference>
<dbReference type="Pfam" id="PF07499">
    <property type="entry name" value="RuvA_C"/>
    <property type="match status" value="1"/>
</dbReference>
<dbReference type="Pfam" id="PF01330">
    <property type="entry name" value="RuvA_N"/>
    <property type="match status" value="1"/>
</dbReference>
<dbReference type="SMART" id="SM00278">
    <property type="entry name" value="HhH1"/>
    <property type="match status" value="2"/>
</dbReference>
<dbReference type="SUPFAM" id="SSF46929">
    <property type="entry name" value="DNA helicase RuvA subunit, C-terminal domain"/>
    <property type="match status" value="1"/>
</dbReference>
<dbReference type="SUPFAM" id="SSF50249">
    <property type="entry name" value="Nucleic acid-binding proteins"/>
    <property type="match status" value="1"/>
</dbReference>
<dbReference type="SUPFAM" id="SSF47781">
    <property type="entry name" value="RuvA domain 2-like"/>
    <property type="match status" value="1"/>
</dbReference>